<gene>
    <name evidence="1" type="primary">glpG</name>
    <name type="ordered locus">KPN78578_37530</name>
    <name type="ORF">KPN_03790</name>
</gene>
<name>GLPG_KLEP7</name>
<keyword id="KW-0997">Cell inner membrane</keyword>
<keyword id="KW-1003">Cell membrane</keyword>
<keyword id="KW-0378">Hydrolase</keyword>
<keyword id="KW-0472">Membrane</keyword>
<keyword id="KW-0645">Protease</keyword>
<keyword id="KW-0720">Serine protease</keyword>
<keyword id="KW-0812">Transmembrane</keyword>
<keyword id="KW-1133">Transmembrane helix</keyword>
<evidence type="ECO:0000255" key="1">
    <source>
        <dbReference type="HAMAP-Rule" id="MF_01594"/>
    </source>
</evidence>
<protein>
    <recommendedName>
        <fullName evidence="1">Rhomboid protease GlpG</fullName>
        <ecNumber evidence="1">3.4.21.105</ecNumber>
    </recommendedName>
    <alternativeName>
        <fullName evidence="1">Intramembrane serine protease</fullName>
    </alternativeName>
</protein>
<sequence length="276" mass="31108">MLMITSFANPRVAQAFVDYMATQGIILTIQQHTQSDVWLADESQAGRVRAELARFLENPADPRYLAASWQSGQTNSGLRYQRFPFFATLRHNAGPFTWAILLICIAVFILQNLLGDQPVMIWLAWPYDPSLQFEAWRYFSHAFMHFSLMHILFNLLWWWYLGGAVEKRIGSGKLVVITVISALLSGFVQHQFSGPWFGGLSGVVYALMGYVWLRGERDPQSGIYLQRGLILFSLVWLIAGWFDVFGMAIANGAHVAGLATGLAMAFVDTLHGRKRA</sequence>
<proteinExistence type="inferred from homology"/>
<reference key="1">
    <citation type="submission" date="2006-09" db="EMBL/GenBank/DDBJ databases">
        <authorList>
            <consortium name="The Klebsiella pneumonia Genome Sequencing Project"/>
            <person name="McClelland M."/>
            <person name="Sanderson E.K."/>
            <person name="Spieth J."/>
            <person name="Clifton W.S."/>
            <person name="Latreille P."/>
            <person name="Sabo A."/>
            <person name="Pepin K."/>
            <person name="Bhonagiri V."/>
            <person name="Porwollik S."/>
            <person name="Ali J."/>
            <person name="Wilson R.K."/>
        </authorList>
    </citation>
    <scope>NUCLEOTIDE SEQUENCE [LARGE SCALE GENOMIC DNA]</scope>
    <source>
        <strain>ATCC 700721 / MGH 78578</strain>
    </source>
</reference>
<dbReference type="EC" id="3.4.21.105" evidence="1"/>
<dbReference type="EMBL" id="CP000647">
    <property type="protein sequence ID" value="ABR79177.1"/>
    <property type="molecule type" value="Genomic_DNA"/>
</dbReference>
<dbReference type="RefSeq" id="WP_004151408.1">
    <property type="nucleotide sequence ID" value="NC_009648.1"/>
</dbReference>
<dbReference type="SMR" id="A6TF43"/>
<dbReference type="STRING" id="272620.KPN_03790"/>
<dbReference type="MEROPS" id="S54.016"/>
<dbReference type="PaxDb" id="272620-KPN_03790"/>
<dbReference type="EnsemblBacteria" id="ABR79177">
    <property type="protein sequence ID" value="ABR79177"/>
    <property type="gene ID" value="KPN_03790"/>
</dbReference>
<dbReference type="GeneID" id="93251118"/>
<dbReference type="KEGG" id="kpn:KPN_03790"/>
<dbReference type="HOGENOM" id="CLU_058989_0_0_6"/>
<dbReference type="Proteomes" id="UP000000265">
    <property type="component" value="Chromosome"/>
</dbReference>
<dbReference type="GO" id="GO:0005886">
    <property type="term" value="C:plasma membrane"/>
    <property type="evidence" value="ECO:0007669"/>
    <property type="project" value="UniProtKB-SubCell"/>
</dbReference>
<dbReference type="GO" id="GO:0004252">
    <property type="term" value="F:serine-type endopeptidase activity"/>
    <property type="evidence" value="ECO:0007669"/>
    <property type="project" value="UniProtKB-UniRule"/>
</dbReference>
<dbReference type="GO" id="GO:0006508">
    <property type="term" value="P:proteolysis"/>
    <property type="evidence" value="ECO:0007669"/>
    <property type="project" value="UniProtKB-UniRule"/>
</dbReference>
<dbReference type="FunFam" id="1.20.1540.10:FF:000003">
    <property type="entry name" value="Rhomboid protease GlpG"/>
    <property type="match status" value="1"/>
</dbReference>
<dbReference type="FunFam" id="3.30.70.2350:FF:000001">
    <property type="entry name" value="Rhomboid protease GlpG"/>
    <property type="match status" value="1"/>
</dbReference>
<dbReference type="Gene3D" id="3.30.70.2350">
    <property type="match status" value="1"/>
</dbReference>
<dbReference type="Gene3D" id="1.20.1540.10">
    <property type="entry name" value="Rhomboid-like"/>
    <property type="match status" value="1"/>
</dbReference>
<dbReference type="HAMAP" id="MF_01594">
    <property type="entry name" value="Rhomboid_GlpG"/>
    <property type="match status" value="1"/>
</dbReference>
<dbReference type="InterPro" id="IPR038236">
    <property type="entry name" value="GlpG_N_sf"/>
</dbReference>
<dbReference type="InterPro" id="IPR022732">
    <property type="entry name" value="Peptidase_S54_GlpG_N"/>
</dbReference>
<dbReference type="InterPro" id="IPR022764">
    <property type="entry name" value="Peptidase_S54_rhomboid_dom"/>
</dbReference>
<dbReference type="InterPro" id="IPR035952">
    <property type="entry name" value="Rhomboid-like_sf"/>
</dbReference>
<dbReference type="InterPro" id="IPR023662">
    <property type="entry name" value="Rhomboid_protease_GlpG"/>
</dbReference>
<dbReference type="NCBIfam" id="NF008155">
    <property type="entry name" value="PRK10907.1"/>
    <property type="match status" value="1"/>
</dbReference>
<dbReference type="NCBIfam" id="TIGR04239">
    <property type="entry name" value="rhombo_GlpG"/>
    <property type="match status" value="1"/>
</dbReference>
<dbReference type="PANTHER" id="PTHR43066:SF26">
    <property type="entry name" value="RHOMBOID PROTEASE GLPG"/>
    <property type="match status" value="1"/>
</dbReference>
<dbReference type="PANTHER" id="PTHR43066">
    <property type="entry name" value="RHOMBOID-RELATED PROTEIN"/>
    <property type="match status" value="1"/>
</dbReference>
<dbReference type="Pfam" id="PF01694">
    <property type="entry name" value="Rhomboid"/>
    <property type="match status" value="1"/>
</dbReference>
<dbReference type="Pfam" id="PF12122">
    <property type="entry name" value="Rhomboid_N"/>
    <property type="match status" value="1"/>
</dbReference>
<dbReference type="SUPFAM" id="SSF144091">
    <property type="entry name" value="Rhomboid-like"/>
    <property type="match status" value="1"/>
</dbReference>
<feature type="chain" id="PRO_0000321686" description="Rhomboid protease GlpG">
    <location>
        <begin position="1"/>
        <end position="276"/>
    </location>
</feature>
<feature type="transmembrane region" description="Helical" evidence="1">
    <location>
        <begin position="94"/>
        <end position="114"/>
    </location>
</feature>
<feature type="transmembrane region" description="Helical" evidence="1">
    <location>
        <begin position="142"/>
        <end position="162"/>
    </location>
</feature>
<feature type="transmembrane region" description="Helical" evidence="1">
    <location>
        <begin position="169"/>
        <end position="189"/>
    </location>
</feature>
<feature type="transmembrane region" description="Helical" evidence="1">
    <location>
        <begin position="192"/>
        <end position="212"/>
    </location>
</feature>
<feature type="transmembrane region" description="Helical" evidence="1">
    <location>
        <begin position="229"/>
        <end position="249"/>
    </location>
</feature>
<feature type="transmembrane region" description="Helical" evidence="1">
    <location>
        <begin position="252"/>
        <end position="272"/>
    </location>
</feature>
<feature type="active site" description="Nucleophile" evidence="1">
    <location>
        <position position="201"/>
    </location>
</feature>
<feature type="active site" evidence="1">
    <location>
        <position position="254"/>
    </location>
</feature>
<organism>
    <name type="scientific">Klebsiella pneumoniae subsp. pneumoniae (strain ATCC 700721 / MGH 78578)</name>
    <dbReference type="NCBI Taxonomy" id="272620"/>
    <lineage>
        <taxon>Bacteria</taxon>
        <taxon>Pseudomonadati</taxon>
        <taxon>Pseudomonadota</taxon>
        <taxon>Gammaproteobacteria</taxon>
        <taxon>Enterobacterales</taxon>
        <taxon>Enterobacteriaceae</taxon>
        <taxon>Klebsiella/Raoultella group</taxon>
        <taxon>Klebsiella</taxon>
        <taxon>Klebsiella pneumoniae complex</taxon>
    </lineage>
</organism>
<accession>A6TF43</accession>
<comment type="function">
    <text evidence="1">Rhomboid-type serine protease that catalyzes intramembrane proteolysis.</text>
</comment>
<comment type="catalytic activity">
    <reaction evidence="1">
        <text>Cleaves type-1 transmembrane domains using a catalytic dyad composed of serine and histidine that are contributed by different transmembrane domains.</text>
        <dbReference type="EC" id="3.4.21.105"/>
    </reaction>
</comment>
<comment type="subcellular location">
    <subcellularLocation>
        <location evidence="1">Cell inner membrane</location>
        <topology evidence="1">Multi-pass membrane protein</topology>
    </subcellularLocation>
</comment>
<comment type="similarity">
    <text evidence="1">Belongs to the peptidase S54 family.</text>
</comment>